<keyword id="KW-0249">Electron transport</keyword>
<keyword id="KW-0472">Membrane</keyword>
<keyword id="KW-0496">Mitochondrion</keyword>
<keyword id="KW-0520">NAD</keyword>
<keyword id="KW-0679">Respiratory chain</keyword>
<keyword id="KW-1278">Translocase</keyword>
<keyword id="KW-0812">Transmembrane</keyword>
<keyword id="KW-1133">Transmembrane helix</keyword>
<keyword id="KW-0813">Transport</keyword>
<keyword id="KW-0830">Ubiquinone</keyword>
<reference key="1">
    <citation type="journal article" date="1998" name="Mol. Biol. Evol.">
        <title>Mitochondrial gene order is not conserved in arthropods: prostriate and metastriate tick mitochondrial genomes.</title>
        <authorList>
            <person name="Black W.C. IV"/>
            <person name="Roehrdanz R.L."/>
        </authorList>
    </citation>
    <scope>NUCLEOTIDE SEQUENCE [GENOMIC DNA]</scope>
</reference>
<name>NU4M_RHISA</name>
<protein>
    <recommendedName>
        <fullName>NADH-ubiquinone oxidoreductase chain 4</fullName>
        <ecNumber>7.1.1.2</ecNumber>
    </recommendedName>
    <alternativeName>
        <fullName>NADH dehydrogenase subunit 4</fullName>
    </alternativeName>
</protein>
<evidence type="ECO:0000250" key="1"/>
<evidence type="ECO:0000255" key="2"/>
<evidence type="ECO:0000305" key="3"/>
<sequence length="433" mass="50758">MLMSVSILCLFFLINPYQIMIYLMIMTLFLLAKGLINNAESFINFFFFDLMSLSMVILTVWISILMIMASKSNNNYKNKIFNFYLLLMMNLLFICFMLENLLMFYLFFEAVLFPIILMISGWGSQPERIQAGFYMLMYTVFGSLPLLILMLLKNQSLSIIFNEWLFNEMGFIFFLMILGFLVKIPMFLFHLWLPKAHVEAPRAGSMILAGVLLKLGFYGLYRFKSFFFLDLLKFSFVLIVISMWGAVLISIFCLYQNDIKSLIAYSSVSHMGITLAGCVTFQLHTSFGMLMMMIGHGLCSSGLFCLKNMIYERLHTRSIMMIKGMINFPNLSMWWFLFSIINMSAPMTMNLFGELFLGLGLMKYSLLLSLPVMMMIFLSACYSMFMYSYINHGQSWMIFSNKMISMREYYLMLLHIIPMIMWFLKINFFMKWI</sequence>
<comment type="function">
    <text evidence="1">Core subunit of the mitochondrial membrane respiratory chain NADH dehydrogenase (Complex I) that is believed to belong to the minimal assembly required for catalysis. Complex I functions in the transfer of electrons from NADH to the respiratory chain. The immediate electron acceptor for the enzyme is believed to be ubiquinone (By similarity).</text>
</comment>
<comment type="catalytic activity">
    <reaction>
        <text>a ubiquinone + NADH + 5 H(+)(in) = a ubiquinol + NAD(+) + 4 H(+)(out)</text>
        <dbReference type="Rhea" id="RHEA:29091"/>
        <dbReference type="Rhea" id="RHEA-COMP:9565"/>
        <dbReference type="Rhea" id="RHEA-COMP:9566"/>
        <dbReference type="ChEBI" id="CHEBI:15378"/>
        <dbReference type="ChEBI" id="CHEBI:16389"/>
        <dbReference type="ChEBI" id="CHEBI:17976"/>
        <dbReference type="ChEBI" id="CHEBI:57540"/>
        <dbReference type="ChEBI" id="CHEBI:57945"/>
        <dbReference type="EC" id="7.1.1.2"/>
    </reaction>
</comment>
<comment type="subcellular location">
    <subcellularLocation>
        <location evidence="1">Mitochondrion membrane</location>
        <topology evidence="1">Multi-pass membrane protein</topology>
    </subcellularLocation>
</comment>
<comment type="similarity">
    <text evidence="3">Belongs to the complex I subunit 4 family.</text>
</comment>
<dbReference type="EC" id="7.1.1.2"/>
<dbReference type="EMBL" id="AF081829">
    <property type="protein sequence ID" value="AAD05526.1"/>
    <property type="molecule type" value="Genomic_DNA"/>
</dbReference>
<dbReference type="PIR" id="T11162">
    <property type="entry name" value="T11162"/>
</dbReference>
<dbReference type="RefSeq" id="NP_008519.1">
    <property type="nucleotide sequence ID" value="NC_002074.1"/>
</dbReference>
<dbReference type="SMR" id="O99825"/>
<dbReference type="GeneID" id="808367"/>
<dbReference type="KEGG" id="rsan:808367"/>
<dbReference type="CTD" id="4538"/>
<dbReference type="OrthoDB" id="6516547at2759"/>
<dbReference type="GO" id="GO:0031966">
    <property type="term" value="C:mitochondrial membrane"/>
    <property type="evidence" value="ECO:0007669"/>
    <property type="project" value="UniProtKB-SubCell"/>
</dbReference>
<dbReference type="GO" id="GO:0008137">
    <property type="term" value="F:NADH dehydrogenase (ubiquinone) activity"/>
    <property type="evidence" value="ECO:0007669"/>
    <property type="project" value="UniProtKB-EC"/>
</dbReference>
<dbReference type="GO" id="GO:0048039">
    <property type="term" value="F:ubiquinone binding"/>
    <property type="evidence" value="ECO:0007669"/>
    <property type="project" value="TreeGrafter"/>
</dbReference>
<dbReference type="GO" id="GO:0042773">
    <property type="term" value="P:ATP synthesis coupled electron transport"/>
    <property type="evidence" value="ECO:0007669"/>
    <property type="project" value="InterPro"/>
</dbReference>
<dbReference type="GO" id="GO:0015990">
    <property type="term" value="P:electron transport coupled proton transport"/>
    <property type="evidence" value="ECO:0007669"/>
    <property type="project" value="TreeGrafter"/>
</dbReference>
<dbReference type="InterPro" id="IPR000260">
    <property type="entry name" value="NADH4_N"/>
</dbReference>
<dbReference type="InterPro" id="IPR003918">
    <property type="entry name" value="NADH_UbQ_OxRdtase"/>
</dbReference>
<dbReference type="InterPro" id="IPR001750">
    <property type="entry name" value="ND/Mrp_TM"/>
</dbReference>
<dbReference type="PANTHER" id="PTHR43507">
    <property type="entry name" value="NADH-UBIQUINONE OXIDOREDUCTASE CHAIN 4"/>
    <property type="match status" value="1"/>
</dbReference>
<dbReference type="PANTHER" id="PTHR43507:SF20">
    <property type="entry name" value="NADH-UBIQUINONE OXIDOREDUCTASE CHAIN 4"/>
    <property type="match status" value="1"/>
</dbReference>
<dbReference type="Pfam" id="PF01059">
    <property type="entry name" value="Oxidored_q5_N"/>
    <property type="match status" value="1"/>
</dbReference>
<dbReference type="Pfam" id="PF00361">
    <property type="entry name" value="Proton_antipo_M"/>
    <property type="match status" value="1"/>
</dbReference>
<dbReference type="PRINTS" id="PR01437">
    <property type="entry name" value="NUOXDRDTASE4"/>
</dbReference>
<accession>O99825</accession>
<organism>
    <name type="scientific">Rhipicephalus sanguineus</name>
    <name type="common">Brown dog tick</name>
    <name type="synonym">Ixodes sanguineus</name>
    <dbReference type="NCBI Taxonomy" id="34632"/>
    <lineage>
        <taxon>Eukaryota</taxon>
        <taxon>Metazoa</taxon>
        <taxon>Ecdysozoa</taxon>
        <taxon>Arthropoda</taxon>
        <taxon>Chelicerata</taxon>
        <taxon>Arachnida</taxon>
        <taxon>Acari</taxon>
        <taxon>Parasitiformes</taxon>
        <taxon>Ixodida</taxon>
        <taxon>Ixodoidea</taxon>
        <taxon>Ixodidae</taxon>
        <taxon>Rhipicephalinae</taxon>
        <taxon>Rhipicephalus</taxon>
        <taxon>Rhipicephalus</taxon>
    </lineage>
</organism>
<feature type="chain" id="PRO_0000117982" description="NADH-ubiquinone oxidoreductase chain 4">
    <location>
        <begin position="1"/>
        <end position="433"/>
    </location>
</feature>
<feature type="transmembrane region" description="Helical" evidence="2">
    <location>
        <begin position="10"/>
        <end position="30"/>
    </location>
</feature>
<feature type="transmembrane region" description="Helical" evidence="2">
    <location>
        <begin position="45"/>
        <end position="65"/>
    </location>
</feature>
<feature type="transmembrane region" description="Helical" evidence="2">
    <location>
        <begin position="80"/>
        <end position="100"/>
    </location>
</feature>
<feature type="transmembrane region" description="Helical" evidence="2">
    <location>
        <begin position="101"/>
        <end position="121"/>
    </location>
</feature>
<feature type="transmembrane region" description="Helical" evidence="2">
    <location>
        <begin position="132"/>
        <end position="152"/>
    </location>
</feature>
<feature type="transmembrane region" description="Helical" evidence="2">
    <location>
        <begin position="169"/>
        <end position="189"/>
    </location>
</feature>
<feature type="transmembrane region" description="Helical" evidence="2">
    <location>
        <begin position="203"/>
        <end position="223"/>
    </location>
</feature>
<feature type="transmembrane region" description="Helical" evidence="2">
    <location>
        <begin position="234"/>
        <end position="254"/>
    </location>
</feature>
<feature type="transmembrane region" description="Helical" evidence="2">
    <location>
        <begin position="261"/>
        <end position="281"/>
    </location>
</feature>
<feature type="transmembrane region" description="Helical" evidence="2">
    <location>
        <begin position="286"/>
        <end position="306"/>
    </location>
</feature>
<feature type="transmembrane region" description="Helical" evidence="2">
    <location>
        <begin position="331"/>
        <end position="353"/>
    </location>
</feature>
<feature type="transmembrane region" description="Helical" evidence="2">
    <location>
        <begin position="366"/>
        <end position="386"/>
    </location>
</feature>
<feature type="transmembrane region" description="Helical" evidence="2">
    <location>
        <begin position="410"/>
        <end position="430"/>
    </location>
</feature>
<proteinExistence type="inferred from homology"/>
<geneLocation type="mitochondrion"/>
<gene>
    <name type="primary">ND4</name>
</gene>